<keyword id="KW-0004">4Fe-4S</keyword>
<keyword id="KW-0028">Amino-acid biosynthesis</keyword>
<keyword id="KW-0100">Branched-chain amino acid biosynthesis</keyword>
<keyword id="KW-0408">Iron</keyword>
<keyword id="KW-0411">Iron-sulfur</keyword>
<keyword id="KW-0432">Leucine biosynthesis</keyword>
<keyword id="KW-0456">Lyase</keyword>
<keyword id="KW-0479">Metal-binding</keyword>
<keyword id="KW-1185">Reference proteome</keyword>
<organism>
    <name type="scientific">Psychromonas ingrahamii (strain DSM 17664 / CCUG 51855 / 37)</name>
    <dbReference type="NCBI Taxonomy" id="357804"/>
    <lineage>
        <taxon>Bacteria</taxon>
        <taxon>Pseudomonadati</taxon>
        <taxon>Pseudomonadota</taxon>
        <taxon>Gammaproteobacteria</taxon>
        <taxon>Alteromonadales</taxon>
        <taxon>Psychromonadaceae</taxon>
        <taxon>Psychromonas</taxon>
    </lineage>
</organism>
<accession>A1SVE7</accession>
<protein>
    <recommendedName>
        <fullName evidence="1">3-isopropylmalate dehydratase large subunit</fullName>
        <ecNumber evidence="1">4.2.1.33</ecNumber>
    </recommendedName>
    <alternativeName>
        <fullName evidence="1">Alpha-IPM isomerase</fullName>
        <shortName evidence="1">IPMI</shortName>
    </alternativeName>
    <alternativeName>
        <fullName evidence="1">Isopropylmalate isomerase</fullName>
    </alternativeName>
</protein>
<proteinExistence type="inferred from homology"/>
<comment type="function">
    <text evidence="1">Catalyzes the isomerization between 2-isopropylmalate and 3-isopropylmalate, via the formation of 2-isopropylmaleate.</text>
</comment>
<comment type="catalytic activity">
    <reaction evidence="1">
        <text>(2R,3S)-3-isopropylmalate = (2S)-2-isopropylmalate</text>
        <dbReference type="Rhea" id="RHEA:32287"/>
        <dbReference type="ChEBI" id="CHEBI:1178"/>
        <dbReference type="ChEBI" id="CHEBI:35121"/>
        <dbReference type="EC" id="4.2.1.33"/>
    </reaction>
</comment>
<comment type="cofactor">
    <cofactor evidence="1">
        <name>[4Fe-4S] cluster</name>
        <dbReference type="ChEBI" id="CHEBI:49883"/>
    </cofactor>
    <text evidence="1">Binds 1 [4Fe-4S] cluster per subunit.</text>
</comment>
<comment type="pathway">
    <text evidence="1">Amino-acid biosynthesis; L-leucine biosynthesis; L-leucine from 3-methyl-2-oxobutanoate: step 2/4.</text>
</comment>
<comment type="subunit">
    <text evidence="1">Heterodimer of LeuC and LeuD.</text>
</comment>
<comment type="similarity">
    <text evidence="1">Belongs to the aconitase/IPM isomerase family. LeuC type 1 subfamily.</text>
</comment>
<reference key="1">
    <citation type="journal article" date="2008" name="BMC Genomics">
        <title>Genomics of an extreme psychrophile, Psychromonas ingrahamii.</title>
        <authorList>
            <person name="Riley M."/>
            <person name="Staley J.T."/>
            <person name="Danchin A."/>
            <person name="Wang T.Z."/>
            <person name="Brettin T.S."/>
            <person name="Hauser L.J."/>
            <person name="Land M.L."/>
            <person name="Thompson L.S."/>
        </authorList>
    </citation>
    <scope>NUCLEOTIDE SEQUENCE [LARGE SCALE GENOMIC DNA]</scope>
    <source>
        <strain>DSM 17664 / CCUG 51855 / 37</strain>
    </source>
</reference>
<dbReference type="EC" id="4.2.1.33" evidence="1"/>
<dbReference type="EMBL" id="CP000510">
    <property type="protein sequence ID" value="ABM03462.1"/>
    <property type="molecule type" value="Genomic_DNA"/>
</dbReference>
<dbReference type="RefSeq" id="WP_011770022.1">
    <property type="nucleotide sequence ID" value="NC_008709.1"/>
</dbReference>
<dbReference type="SMR" id="A1SVE7"/>
<dbReference type="STRING" id="357804.Ping_1669"/>
<dbReference type="KEGG" id="pin:Ping_1669"/>
<dbReference type="eggNOG" id="COG0065">
    <property type="taxonomic scope" value="Bacteria"/>
</dbReference>
<dbReference type="HOGENOM" id="CLU_006714_3_4_6"/>
<dbReference type="OrthoDB" id="9802769at2"/>
<dbReference type="UniPathway" id="UPA00048">
    <property type="reaction ID" value="UER00071"/>
</dbReference>
<dbReference type="Proteomes" id="UP000000639">
    <property type="component" value="Chromosome"/>
</dbReference>
<dbReference type="GO" id="GO:0003861">
    <property type="term" value="F:3-isopropylmalate dehydratase activity"/>
    <property type="evidence" value="ECO:0007669"/>
    <property type="project" value="UniProtKB-UniRule"/>
</dbReference>
<dbReference type="GO" id="GO:0051539">
    <property type="term" value="F:4 iron, 4 sulfur cluster binding"/>
    <property type="evidence" value="ECO:0007669"/>
    <property type="project" value="UniProtKB-KW"/>
</dbReference>
<dbReference type="GO" id="GO:0046872">
    <property type="term" value="F:metal ion binding"/>
    <property type="evidence" value="ECO:0007669"/>
    <property type="project" value="UniProtKB-KW"/>
</dbReference>
<dbReference type="GO" id="GO:0009098">
    <property type="term" value="P:L-leucine biosynthetic process"/>
    <property type="evidence" value="ECO:0007669"/>
    <property type="project" value="UniProtKB-UniRule"/>
</dbReference>
<dbReference type="CDD" id="cd01583">
    <property type="entry name" value="IPMI"/>
    <property type="match status" value="1"/>
</dbReference>
<dbReference type="FunFam" id="3.30.499.10:FF:000007">
    <property type="entry name" value="3-isopropylmalate dehydratase large subunit"/>
    <property type="match status" value="1"/>
</dbReference>
<dbReference type="Gene3D" id="3.30.499.10">
    <property type="entry name" value="Aconitase, domain 3"/>
    <property type="match status" value="2"/>
</dbReference>
<dbReference type="HAMAP" id="MF_01026">
    <property type="entry name" value="LeuC_type1"/>
    <property type="match status" value="1"/>
</dbReference>
<dbReference type="InterPro" id="IPR004430">
    <property type="entry name" value="3-IsopropMal_deHydase_lsu"/>
</dbReference>
<dbReference type="InterPro" id="IPR015931">
    <property type="entry name" value="Acnase/IPM_dHydase_lsu_aba_1/3"/>
</dbReference>
<dbReference type="InterPro" id="IPR001030">
    <property type="entry name" value="Acoase/IPM_deHydtase_lsu_aba"/>
</dbReference>
<dbReference type="InterPro" id="IPR018136">
    <property type="entry name" value="Aconitase_4Fe-4S_BS"/>
</dbReference>
<dbReference type="InterPro" id="IPR036008">
    <property type="entry name" value="Aconitase_4Fe-4S_dom"/>
</dbReference>
<dbReference type="InterPro" id="IPR050067">
    <property type="entry name" value="IPM_dehydratase_rel_enz"/>
</dbReference>
<dbReference type="InterPro" id="IPR033941">
    <property type="entry name" value="IPMI_cat"/>
</dbReference>
<dbReference type="NCBIfam" id="TIGR00170">
    <property type="entry name" value="leuC"/>
    <property type="match status" value="1"/>
</dbReference>
<dbReference type="NCBIfam" id="NF004016">
    <property type="entry name" value="PRK05478.1"/>
    <property type="match status" value="1"/>
</dbReference>
<dbReference type="NCBIfam" id="NF009116">
    <property type="entry name" value="PRK12466.1"/>
    <property type="match status" value="1"/>
</dbReference>
<dbReference type="PANTHER" id="PTHR43822:SF9">
    <property type="entry name" value="3-ISOPROPYLMALATE DEHYDRATASE"/>
    <property type="match status" value="1"/>
</dbReference>
<dbReference type="PANTHER" id="PTHR43822">
    <property type="entry name" value="HOMOACONITASE, MITOCHONDRIAL-RELATED"/>
    <property type="match status" value="1"/>
</dbReference>
<dbReference type="Pfam" id="PF00330">
    <property type="entry name" value="Aconitase"/>
    <property type="match status" value="1"/>
</dbReference>
<dbReference type="PRINTS" id="PR00415">
    <property type="entry name" value="ACONITASE"/>
</dbReference>
<dbReference type="SUPFAM" id="SSF53732">
    <property type="entry name" value="Aconitase iron-sulfur domain"/>
    <property type="match status" value="1"/>
</dbReference>
<dbReference type="PROSITE" id="PS01244">
    <property type="entry name" value="ACONITASE_2"/>
    <property type="match status" value="1"/>
</dbReference>
<gene>
    <name evidence="1" type="primary">leuC</name>
    <name type="ordered locus">Ping_1669</name>
</gene>
<name>LEUC_PSYIN</name>
<sequence length="465" mass="50077">MTKTMYEKIWDAHLVYEPESGSPILFVDRHLMHEVTSPQAFEGLKLQNRGVRNTHSILATMDHCVPTKGRAEISDPVAAKQIQTMAVNCKEHGINLYDMSNANNGIIHIVVPEHGFVHPGMVVCCGDSHTSTHGAFGTLAFGIGTSEVEHVMATQTLQQQKSKTLLINVEGTLSKHATAKDIALAIIGKTGTAGGTGYVIEFAGDAVVNLTMEGRMTLCNMAIEAGARAGLIAPDQKTFDFLEGKEFAPKGKDWDAALAYWKTLPSDKGADFDKVINFKAEDIAPQVTWGTSPEQVISVNGIVPAPTDFDDPIKAQACKNALEYMKIKAGQKMTDVNVDIVFLGSCTNGRIEDFRAAAEMLKGKTIAPGVQAIAVPGSYPVKEQAEAEGLDKIFLDAGWEWREPGCSMCLAMNGDELTEGQRSASTSNRNFEGRQGKNGLTHLVSPAMAAAASIAGHFVDIRDWA</sequence>
<evidence type="ECO:0000255" key="1">
    <source>
        <dbReference type="HAMAP-Rule" id="MF_01026"/>
    </source>
</evidence>
<feature type="chain" id="PRO_1000135707" description="3-isopropylmalate dehydratase large subunit">
    <location>
        <begin position="1"/>
        <end position="465"/>
    </location>
</feature>
<feature type="binding site" evidence="1">
    <location>
        <position position="346"/>
    </location>
    <ligand>
        <name>[4Fe-4S] cluster</name>
        <dbReference type="ChEBI" id="CHEBI:49883"/>
    </ligand>
</feature>
<feature type="binding site" evidence="1">
    <location>
        <position position="406"/>
    </location>
    <ligand>
        <name>[4Fe-4S] cluster</name>
        <dbReference type="ChEBI" id="CHEBI:49883"/>
    </ligand>
</feature>
<feature type="binding site" evidence="1">
    <location>
        <position position="409"/>
    </location>
    <ligand>
        <name>[4Fe-4S] cluster</name>
        <dbReference type="ChEBI" id="CHEBI:49883"/>
    </ligand>
</feature>